<dbReference type="EMBL" id="BX284605">
    <property type="protein sequence ID" value="SIT60445.1"/>
    <property type="molecule type" value="Genomic_DNA"/>
</dbReference>
<dbReference type="RefSeq" id="NP_001335555.1">
    <property type="nucleotide sequence ID" value="NM_001348574.1"/>
</dbReference>
<dbReference type="RefSeq" id="NP_001380207.1">
    <property type="nucleotide sequence ID" value="NM_001392513.1"/>
</dbReference>
<dbReference type="SMR" id="A0A1N7SYS3"/>
<dbReference type="FunCoup" id="A0A1N7SYS3">
    <property type="interactions" value="478"/>
</dbReference>
<dbReference type="STRING" id="6239.C24G6.13a.1"/>
<dbReference type="EnsemblMetazoa" id="C24G6.13a.1">
    <property type="protein sequence ID" value="C24G6.13a.1"/>
    <property type="gene ID" value="WBGene00302991"/>
</dbReference>
<dbReference type="EnsemblMetazoa" id="C24G6.13a.2">
    <property type="protein sequence ID" value="C24G6.13a.2"/>
    <property type="gene ID" value="WBGene00302991"/>
</dbReference>
<dbReference type="GeneID" id="36804982"/>
<dbReference type="AGR" id="WB:WBGene00302991"/>
<dbReference type="WormBase" id="C24G6.13a">
    <property type="protein sequence ID" value="CE51852"/>
    <property type="gene ID" value="WBGene00302991"/>
    <property type="gene designation" value="cox-16"/>
</dbReference>
<dbReference type="InParanoid" id="A0A1N7SYS3"/>
<dbReference type="OrthoDB" id="1733656at2759"/>
<dbReference type="Reactome" id="R-CEL-9864848">
    <property type="pathway name" value="Complex IV assembly"/>
</dbReference>
<dbReference type="PRO" id="PR:A0A1N7SYS3"/>
<dbReference type="Proteomes" id="UP000001940">
    <property type="component" value="Chromosome V"/>
</dbReference>
<dbReference type="Bgee" id="WBGene00302991">
    <property type="expression patterns" value="Expressed in pharyngeal muscle cell (C elegans) and 3 other cell types or tissues"/>
</dbReference>
<dbReference type="ExpressionAtlas" id="A0A1N7SYS3">
    <property type="expression patterns" value="baseline and differential"/>
</dbReference>
<dbReference type="GO" id="GO:0005743">
    <property type="term" value="C:mitochondrial inner membrane"/>
    <property type="evidence" value="ECO:0000318"/>
    <property type="project" value="GO_Central"/>
</dbReference>
<dbReference type="GO" id="GO:0033617">
    <property type="term" value="P:mitochondrial cytochrome c oxidase assembly"/>
    <property type="evidence" value="ECO:0000315"/>
    <property type="project" value="UniProtKB"/>
</dbReference>
<dbReference type="InterPro" id="IPR020164">
    <property type="entry name" value="Cyt_c_Oxase_assmbl_COX16"/>
</dbReference>
<dbReference type="PANTHER" id="PTHR17130:SF14">
    <property type="entry name" value="CYTOCHROME C OXIDASE ASSEMBLY PROTEIN COX16 HOMOLOG, MITOCHONDRIAL"/>
    <property type="match status" value="1"/>
</dbReference>
<dbReference type="PANTHER" id="PTHR17130">
    <property type="entry name" value="MITOCHONDRIAL OUTER MEMBRANE PROTEIN 25"/>
    <property type="match status" value="1"/>
</dbReference>
<dbReference type="Pfam" id="PF14138">
    <property type="entry name" value="COX16"/>
    <property type="match status" value="1"/>
</dbReference>
<gene>
    <name evidence="5" type="primary">cox-16</name>
    <name evidence="5" type="ORF">C24G6.13</name>
</gene>
<evidence type="ECO:0000250" key="1">
    <source>
        <dbReference type="UniProtKB" id="Q9P0S2"/>
    </source>
</evidence>
<evidence type="ECO:0000255" key="2"/>
<evidence type="ECO:0000269" key="3">
    <source>
    </source>
</evidence>
<evidence type="ECO:0000305" key="4"/>
<evidence type="ECO:0000312" key="5">
    <source>
        <dbReference type="WormBase" id="C24G6.13a"/>
    </source>
</evidence>
<accession>A0A1N7SYS3</accession>
<keyword id="KW-0472">Membrane</keyword>
<keyword id="KW-0496">Mitochondrion</keyword>
<keyword id="KW-0999">Mitochondrion inner membrane</keyword>
<keyword id="KW-1185">Reference proteome</keyword>
<keyword id="KW-0812">Transmembrane</keyword>
<keyword id="KW-1133">Transmembrane helix</keyword>
<protein>
    <recommendedName>
        <fullName evidence="4">Cytochrome c oxidase assembly protein COX16 homolog, mitochondrial</fullName>
    </recommendedName>
</protein>
<organism>
    <name type="scientific">Caenorhabditis elegans</name>
    <dbReference type="NCBI Taxonomy" id="6239"/>
    <lineage>
        <taxon>Eukaryota</taxon>
        <taxon>Metazoa</taxon>
        <taxon>Ecdysozoa</taxon>
        <taxon>Nematoda</taxon>
        <taxon>Chromadorea</taxon>
        <taxon>Rhabditida</taxon>
        <taxon>Rhabditina</taxon>
        <taxon>Rhabditomorpha</taxon>
        <taxon>Rhabditoidea</taxon>
        <taxon>Rhabditidae</taxon>
        <taxon>Peloderinae</taxon>
        <taxon>Caenorhabditis</taxon>
    </lineage>
</organism>
<name>COX16_CAEEL</name>
<comment type="function">
    <text evidence="3">Required for the assembly of the mitochondrial respiratory chain complex IV (CIV), also known as cytochrome c oxidase.</text>
</comment>
<comment type="subcellular location">
    <subcellularLocation>
        <location evidence="1">Mitochondrion inner membrane</location>
        <topology evidence="1">Single-pass membrane protein</topology>
    </subcellularLocation>
</comment>
<comment type="similarity">
    <text evidence="4">Belongs to the COX16 family.</text>
</comment>
<proteinExistence type="inferred from homology"/>
<feature type="chain" id="PRO_0000443803" description="Cytochrome c oxidase assembly protein COX16 homolog, mitochondrial">
    <location>
        <begin position="1"/>
        <end position="115"/>
    </location>
</feature>
<feature type="topological domain" description="Mitochondrial matrix" evidence="1">
    <location>
        <begin position="1"/>
        <end position="6"/>
    </location>
</feature>
<feature type="transmembrane region" description="Helical" evidence="2">
    <location>
        <begin position="7"/>
        <end position="29"/>
    </location>
</feature>
<feature type="topological domain" description="Mitochondrial intermembrane" evidence="1">
    <location>
        <begin position="30"/>
        <end position="115"/>
    </location>
</feature>
<reference key="1">
    <citation type="journal article" date="1998" name="Science">
        <title>Genome sequence of the nematode C. elegans: a platform for investigating biology.</title>
        <authorList>
            <consortium name="The C. elegans sequencing consortium"/>
        </authorList>
    </citation>
    <scope>NUCLEOTIDE SEQUENCE [LARGE SCALE GENOMIC DNA]</scope>
    <source>
        <strain>Bristol N2</strain>
    </source>
</reference>
<reference key="2">
    <citation type="journal article" date="2018" name="Biochim. Biophys. Acta">
        <title>COX16 is required for assembly of cytochrome c oxidase in human cells and is involved in copper delivery to COX2.</title>
        <authorList>
            <person name="Cerqua C."/>
            <person name="Morbidoni V."/>
            <person name="Desbats M.A."/>
            <person name="Doimo M."/>
            <person name="Frasson C."/>
            <person name="Sacconi S."/>
            <person name="Baldoin M.C."/>
            <person name="Sartori G."/>
            <person name="Basso G."/>
            <person name="Salviati L."/>
            <person name="Trevisson E."/>
        </authorList>
    </citation>
    <scope>FUNCTION</scope>
</reference>
<sequence length="115" mass="13522">MSRLKFVRVGLPFFAIVLGSAYGLHFFQQVRFDFRKIKQEDDNLELLRSDLTRSGLRLREGVTVESVYKEVAELDTDNWENIRGPRDTEDLTDYNLIKKQQQEASRKVRELKSNV</sequence>